<feature type="chain" id="PRO_1000078646" description="Cell division topological specificity factor">
    <location>
        <begin position="1"/>
        <end position="85"/>
    </location>
</feature>
<comment type="function">
    <text evidence="1">Prevents the cell division inhibition by proteins MinC and MinD at internal division sites while permitting inhibition at polar sites. This ensures cell division at the proper site by restricting the formation of a division septum at the midpoint of the long axis of the cell.</text>
</comment>
<comment type="similarity">
    <text evidence="1">Belongs to the MinE family.</text>
</comment>
<name>MINE_SHEB9</name>
<protein>
    <recommendedName>
        <fullName evidence="1">Cell division topological specificity factor</fullName>
    </recommendedName>
</protein>
<keyword id="KW-0131">Cell cycle</keyword>
<keyword id="KW-0132">Cell division</keyword>
<organism>
    <name type="scientific">Shewanella baltica (strain OS195)</name>
    <dbReference type="NCBI Taxonomy" id="399599"/>
    <lineage>
        <taxon>Bacteria</taxon>
        <taxon>Pseudomonadati</taxon>
        <taxon>Pseudomonadota</taxon>
        <taxon>Gammaproteobacteria</taxon>
        <taxon>Alteromonadales</taxon>
        <taxon>Shewanellaceae</taxon>
        <taxon>Shewanella</taxon>
    </lineage>
</organism>
<sequence>MSLLDYFKSKKKPSTAVMAKERLQIIVAHQRGQRDTPDYFPQMKQEIIAVIRKYVQISDDQVSVQLDQNDANLSVLELNVTLPDR</sequence>
<dbReference type="EMBL" id="CP000891">
    <property type="protein sequence ID" value="ABX49071.1"/>
    <property type="molecule type" value="Genomic_DNA"/>
</dbReference>
<dbReference type="RefSeq" id="WP_006081361.1">
    <property type="nucleotide sequence ID" value="NC_009997.1"/>
</dbReference>
<dbReference type="SMR" id="A9KYY3"/>
<dbReference type="GeneID" id="11772106"/>
<dbReference type="KEGG" id="sbn:Sbal195_1900"/>
<dbReference type="HOGENOM" id="CLU_137929_2_2_6"/>
<dbReference type="Proteomes" id="UP000000770">
    <property type="component" value="Chromosome"/>
</dbReference>
<dbReference type="GO" id="GO:0051301">
    <property type="term" value="P:cell division"/>
    <property type="evidence" value="ECO:0007669"/>
    <property type="project" value="UniProtKB-KW"/>
</dbReference>
<dbReference type="GO" id="GO:0032955">
    <property type="term" value="P:regulation of division septum assembly"/>
    <property type="evidence" value="ECO:0007669"/>
    <property type="project" value="InterPro"/>
</dbReference>
<dbReference type="FunFam" id="3.30.1070.10:FF:000001">
    <property type="entry name" value="Cell division topological specificity factor"/>
    <property type="match status" value="1"/>
</dbReference>
<dbReference type="Gene3D" id="3.30.1070.10">
    <property type="entry name" value="Cell division topological specificity factor MinE"/>
    <property type="match status" value="1"/>
</dbReference>
<dbReference type="HAMAP" id="MF_00262">
    <property type="entry name" value="MinE"/>
    <property type="match status" value="1"/>
</dbReference>
<dbReference type="InterPro" id="IPR005527">
    <property type="entry name" value="MinE"/>
</dbReference>
<dbReference type="InterPro" id="IPR036707">
    <property type="entry name" value="MinE_sf"/>
</dbReference>
<dbReference type="NCBIfam" id="TIGR01215">
    <property type="entry name" value="minE"/>
    <property type="match status" value="1"/>
</dbReference>
<dbReference type="NCBIfam" id="NF001422">
    <property type="entry name" value="PRK00296.1"/>
    <property type="match status" value="1"/>
</dbReference>
<dbReference type="Pfam" id="PF03776">
    <property type="entry name" value="MinE"/>
    <property type="match status" value="1"/>
</dbReference>
<dbReference type="SUPFAM" id="SSF55229">
    <property type="entry name" value="Cell division protein MinE topological specificity domain"/>
    <property type="match status" value="1"/>
</dbReference>
<proteinExistence type="inferred from homology"/>
<accession>A9KYY3</accession>
<evidence type="ECO:0000255" key="1">
    <source>
        <dbReference type="HAMAP-Rule" id="MF_00262"/>
    </source>
</evidence>
<reference key="1">
    <citation type="submission" date="2007-11" db="EMBL/GenBank/DDBJ databases">
        <title>Complete sequence of chromosome of Shewanella baltica OS195.</title>
        <authorList>
            <consortium name="US DOE Joint Genome Institute"/>
            <person name="Copeland A."/>
            <person name="Lucas S."/>
            <person name="Lapidus A."/>
            <person name="Barry K."/>
            <person name="Glavina del Rio T."/>
            <person name="Dalin E."/>
            <person name="Tice H."/>
            <person name="Pitluck S."/>
            <person name="Chain P."/>
            <person name="Malfatti S."/>
            <person name="Shin M."/>
            <person name="Vergez L."/>
            <person name="Schmutz J."/>
            <person name="Larimer F."/>
            <person name="Land M."/>
            <person name="Hauser L."/>
            <person name="Kyrpides N."/>
            <person name="Kim E."/>
            <person name="Brettar I."/>
            <person name="Rodrigues J."/>
            <person name="Konstantinidis K."/>
            <person name="Klappenbach J."/>
            <person name="Hofle M."/>
            <person name="Tiedje J."/>
            <person name="Richardson P."/>
        </authorList>
    </citation>
    <scope>NUCLEOTIDE SEQUENCE [LARGE SCALE GENOMIC DNA]</scope>
    <source>
        <strain>OS195</strain>
    </source>
</reference>
<gene>
    <name evidence="1" type="primary">minE</name>
    <name type="ordered locus">Sbal195_1900</name>
</gene>